<accession>Q75AA8</accession>
<reference key="1">
    <citation type="journal article" date="2004" name="Science">
        <title>The Ashbya gossypii genome as a tool for mapping the ancient Saccharomyces cerevisiae genome.</title>
        <authorList>
            <person name="Dietrich F.S."/>
            <person name="Voegeli S."/>
            <person name="Brachat S."/>
            <person name="Lerch A."/>
            <person name="Gates K."/>
            <person name="Steiner S."/>
            <person name="Mohr C."/>
            <person name="Poehlmann R."/>
            <person name="Luedi P."/>
            <person name="Choi S."/>
            <person name="Wing R.A."/>
            <person name="Flavier A."/>
            <person name="Gaffney T.D."/>
            <person name="Philippsen P."/>
        </authorList>
    </citation>
    <scope>NUCLEOTIDE SEQUENCE [LARGE SCALE GENOMIC DNA]</scope>
    <source>
        <strain>ATCC 10895 / CBS 109.51 / FGSC 9923 / NRRL Y-1056</strain>
    </source>
</reference>
<reference key="2">
    <citation type="journal article" date="2013" name="G3 (Bethesda)">
        <title>Genomes of Ashbya fungi isolated from insects reveal four mating-type loci, numerous translocations, lack of transposons, and distinct gene duplications.</title>
        <authorList>
            <person name="Dietrich F.S."/>
            <person name="Voegeli S."/>
            <person name="Kuo S."/>
            <person name="Philippsen P."/>
        </authorList>
    </citation>
    <scope>GENOME REANNOTATION</scope>
    <source>
        <strain>ATCC 10895 / CBS 109.51 / FGSC 9923 / NRRL Y-1056</strain>
    </source>
</reference>
<gene>
    <name type="primary">TMA20</name>
    <name type="ordered locus">ADR010C</name>
</gene>
<sequence>MFKKFSKEDIHTRTKVKTSVQRSLKSKLVEQFPKLEEVIDELLPKKTELQIIKCSDKIQLYAVGDEVLFFQKFEELIPTLRFVHKYPEAFPTIQIDRGAIKFVLSGANIMCPGLTSSGAALPEAPGLAQDSIVVVNAENKENALAIGKLLMSTEDIKSINKGHGVETIHHLGDCLWNFSLV</sequence>
<protein>
    <recommendedName>
        <fullName>Translation machinery-associated protein 20</fullName>
    </recommendedName>
</protein>
<feature type="chain" id="PRO_0000245366" description="Translation machinery-associated protein 20">
    <location>
        <begin position="1"/>
        <end position="181"/>
    </location>
</feature>
<feature type="domain" description="PUA" evidence="2">
    <location>
        <begin position="90"/>
        <end position="172"/>
    </location>
</feature>
<keyword id="KW-0963">Cytoplasm</keyword>
<keyword id="KW-0648">Protein biosynthesis</keyword>
<keyword id="KW-1185">Reference proteome</keyword>
<keyword id="KW-0694">RNA-binding</keyword>
<dbReference type="EMBL" id="AE016817">
    <property type="protein sequence ID" value="AAS51930.1"/>
    <property type="molecule type" value="Genomic_DNA"/>
</dbReference>
<dbReference type="RefSeq" id="NP_984106.1">
    <property type="nucleotide sequence ID" value="NM_209459.1"/>
</dbReference>
<dbReference type="SMR" id="Q75AA8"/>
<dbReference type="FunCoup" id="Q75AA8">
    <property type="interactions" value="546"/>
</dbReference>
<dbReference type="STRING" id="284811.Q75AA8"/>
<dbReference type="EnsemblFungi" id="AAS51930">
    <property type="protein sequence ID" value="AAS51930"/>
    <property type="gene ID" value="AGOS_ADR010C"/>
</dbReference>
<dbReference type="GeneID" id="4620254"/>
<dbReference type="KEGG" id="ago:AGOS_ADR010C"/>
<dbReference type="eggNOG" id="KOG2523">
    <property type="taxonomic scope" value="Eukaryota"/>
</dbReference>
<dbReference type="HOGENOM" id="CLU_090468_0_1_1"/>
<dbReference type="InParanoid" id="Q75AA8"/>
<dbReference type="OMA" id="GVENIHY"/>
<dbReference type="OrthoDB" id="10249667at2759"/>
<dbReference type="Proteomes" id="UP000000591">
    <property type="component" value="Chromosome IV"/>
</dbReference>
<dbReference type="GO" id="GO:0005829">
    <property type="term" value="C:cytosol"/>
    <property type="evidence" value="ECO:0007669"/>
    <property type="project" value="EnsemblFungi"/>
</dbReference>
<dbReference type="GO" id="GO:0003723">
    <property type="term" value="F:RNA binding"/>
    <property type="evidence" value="ECO:0007669"/>
    <property type="project" value="UniProtKB-KW"/>
</dbReference>
<dbReference type="GO" id="GO:0001731">
    <property type="term" value="P:formation of translation preinitiation complex"/>
    <property type="evidence" value="ECO:0000318"/>
    <property type="project" value="GO_Central"/>
</dbReference>
<dbReference type="GO" id="GO:0000184">
    <property type="term" value="P:nuclear-transcribed mRNA catabolic process, nonsense-mediated decay"/>
    <property type="evidence" value="ECO:0007669"/>
    <property type="project" value="EnsemblFungi"/>
</dbReference>
<dbReference type="GO" id="GO:0042254">
    <property type="term" value="P:ribosome biogenesis"/>
    <property type="evidence" value="ECO:0007669"/>
    <property type="project" value="EnsemblFungi"/>
</dbReference>
<dbReference type="CDD" id="cd11609">
    <property type="entry name" value="MCT1_N"/>
    <property type="match status" value="1"/>
</dbReference>
<dbReference type="CDD" id="cd21155">
    <property type="entry name" value="PUA_MCTS-1-like"/>
    <property type="match status" value="1"/>
</dbReference>
<dbReference type="FunFam" id="3.10.400.20:FF:000001">
    <property type="entry name" value="Malignant T-cell-amplified sequence 1"/>
    <property type="match status" value="1"/>
</dbReference>
<dbReference type="Gene3D" id="3.10.400.20">
    <property type="match status" value="1"/>
</dbReference>
<dbReference type="InterPro" id="IPR016437">
    <property type="entry name" value="MCT-1/Tma20"/>
</dbReference>
<dbReference type="InterPro" id="IPR041366">
    <property type="entry name" value="Pre-PUA"/>
</dbReference>
<dbReference type="InterPro" id="IPR002478">
    <property type="entry name" value="PUA"/>
</dbReference>
<dbReference type="InterPro" id="IPR015947">
    <property type="entry name" value="PUA-like_sf"/>
</dbReference>
<dbReference type="InterPro" id="IPR004521">
    <property type="entry name" value="Uncharacterised_CHP00451"/>
</dbReference>
<dbReference type="NCBIfam" id="TIGR00451">
    <property type="entry name" value="unchar_dom_2"/>
    <property type="match status" value="1"/>
</dbReference>
<dbReference type="PANTHER" id="PTHR22798:SF0">
    <property type="entry name" value="MALIGNANT T-CELL-AMPLIFIED SEQUENCE 1"/>
    <property type="match status" value="1"/>
</dbReference>
<dbReference type="PANTHER" id="PTHR22798">
    <property type="entry name" value="MCT-1 PROTEIN"/>
    <property type="match status" value="1"/>
</dbReference>
<dbReference type="Pfam" id="PF17832">
    <property type="entry name" value="Pre-PUA"/>
    <property type="match status" value="1"/>
</dbReference>
<dbReference type="Pfam" id="PF01472">
    <property type="entry name" value="PUA"/>
    <property type="match status" value="1"/>
</dbReference>
<dbReference type="PIRSF" id="PIRSF005067">
    <property type="entry name" value="Tma_RNA-bind_prd"/>
    <property type="match status" value="1"/>
</dbReference>
<dbReference type="SMART" id="SM00359">
    <property type="entry name" value="PUA"/>
    <property type="match status" value="1"/>
</dbReference>
<dbReference type="SUPFAM" id="SSF88697">
    <property type="entry name" value="PUA domain-like"/>
    <property type="match status" value="1"/>
</dbReference>
<dbReference type="PROSITE" id="PS50890">
    <property type="entry name" value="PUA"/>
    <property type="match status" value="1"/>
</dbReference>
<organism>
    <name type="scientific">Eremothecium gossypii (strain ATCC 10895 / CBS 109.51 / FGSC 9923 / NRRL Y-1056)</name>
    <name type="common">Yeast</name>
    <name type="synonym">Ashbya gossypii</name>
    <dbReference type="NCBI Taxonomy" id="284811"/>
    <lineage>
        <taxon>Eukaryota</taxon>
        <taxon>Fungi</taxon>
        <taxon>Dikarya</taxon>
        <taxon>Ascomycota</taxon>
        <taxon>Saccharomycotina</taxon>
        <taxon>Saccharomycetes</taxon>
        <taxon>Saccharomycetales</taxon>
        <taxon>Saccharomycetaceae</taxon>
        <taxon>Eremothecium</taxon>
    </lineage>
</organism>
<name>TMA20_EREGS</name>
<proteinExistence type="inferred from homology"/>
<evidence type="ECO:0000250" key="1"/>
<evidence type="ECO:0000255" key="2">
    <source>
        <dbReference type="PROSITE-ProRule" id="PRU00161"/>
    </source>
</evidence>
<evidence type="ECO:0000305" key="3"/>
<comment type="function">
    <text evidence="1">Involved in translation.</text>
</comment>
<comment type="subunit">
    <text evidence="1">Associates with ribosomal complexes.</text>
</comment>
<comment type="subcellular location">
    <subcellularLocation>
        <location evidence="1">Cytoplasm</location>
    </subcellularLocation>
</comment>
<comment type="similarity">
    <text evidence="3">Belongs to the TMA20 family.</text>
</comment>